<comment type="function">
    <text evidence="1">May be a general defense protein.</text>
</comment>
<comment type="subcellular location">
    <subcellularLocation>
        <location evidence="2">Membrane</location>
        <topology evidence="2">Multi-pass membrane protein</topology>
    </subcellularLocation>
</comment>
<comment type="similarity">
    <text evidence="6">Belongs to the ABC transporter superfamily. ABCG family. PDR (TC 3.A.1.205) subfamily.</text>
</comment>
<comment type="sequence caution" evidence="6">
    <conflict type="erroneous gene model prediction">
        <sequence resource="EMBL-CDS" id="BAD29138"/>
    </conflict>
</comment>
<comment type="sequence caution" evidence="6">
    <conflict type="erroneous gene model prediction">
        <sequence resource="EMBL-CDS" id="BAD29139"/>
    </conflict>
</comment>
<comment type="sequence caution" evidence="6">
    <conflict type="erroneous gene model prediction">
        <sequence resource="EMBL-CDS" id="BAD29206"/>
    </conflict>
</comment>
<comment type="sequence caution" evidence="6">
    <conflict type="erroneous gene model prediction">
        <sequence resource="EMBL-CDS" id="BAD29207"/>
    </conflict>
</comment>
<comment type="sequence caution" evidence="6">
    <conflict type="erroneous initiation">
        <sequence resource="EMBL-CDS" id="BAG87376"/>
    </conflict>
    <text>Truncated N-terminus.</text>
</comment>
<comment type="sequence caution" evidence="6">
    <conflict type="erroneous gene model prediction">
        <sequence resource="EMBL-CDS" id="BAH94511"/>
    </conflict>
</comment>
<sequence>MDDAGEIHALGGSLRREASSARSGDAAVFFSRSSSRDEDDEEALRWAALEKLPTYDRARTAVLAMPEGELREVNVQRLGPQERHALLQRLAWVGDDHARFLSKFKDRVDRVGIELPTIEVRYENLNVEAEAYVGSRGLPTILNTYANVLEGLANTLHITPNRKQKISILHNVSGIIKPHRMTLLLGPPGAGKTTLLLALAGNVPSGLKVSGQITYNGHTMDEFEPRRSAAYVSQHDLHMGELTVRETVNFSAKCQGIGHRYDLLMELSRREKEENIKPDPEVDIYLKAAATGEQKAEVVTNHILKVLGLDICADTIVGNNMLRGISGGQKKRVTTAEMIVTPGRALFMDEISTGLDSSTTYNIVDSIRQTIHIVGGTAVIALLQPAPETYELFDDIILLSDGQVVYNGPREHVLEFFESVGFKCPERKGVADFLQEVTSRKDQRQYWMHGDETYRYVPVKEFAEAFQSFHVGQAIRSELAIPFDKSRSHPAALKTSKYGASMKELLKANIDREILLMKRNSFVYIFKATQLTLMTFIAMTVFIRTNMHHDSITNGGIYMGALFFGILMIMFNGLAEVGLTIAKLPVFFKQRDLLFYPAWTYSLPSWIIKTPLSLLNVTIWVFITYYVIGFDPNVERLFRQFLLLLVMNETSSGLFRFIAGFARHQVVASTMGSFCILIFMLLGGFILSRENVKKWWIWGYWISPLMYAQNAISVNEFLGHSWNKTIPGFREPLGKLVLESRGVFPEAKWYWIGVGALLGYVLLFNILYTICLTFLNPFDSNQPTISEETLKIKQANLTGDVIEASSRGRITTNTNTADDSNDEAISNHATVNSSPGKKGMVLPFVPLSITFEDIRYSVDMPEVIKAQGVTESRLELLKGISGSFRPGVLTALMGVSGAGKTTLMDVLAGRKTSGYIEGNITISGYPKKQETFARVSGYCEQNDIHSPNVTVYESLAFSAWLRLPAEIDSATRKMFIDEVMELVELSPLKDSLVGLPGVSGLSTEQRKRLTIAVELVANPSIIFMDEPTSGLDARAAAIVMRAIRNTVDTGRTVVCTIHQPSIDIFESFDELFLMKRGGEEIYVGPVGQHSCELIRYFESIEGVSKIKHGYNPSTWMLEVTSTVQEQITGVNFSEIYKNSELYRRNKSMIKELSSPPDGSSDLSFPTEYSQTFITQCLACLWKQSLSYWRNPPYTAVKYFYTIVIALLFGTMFWGVGRKRSNQQDLFNAMGSMYASVLFMGVQNSSSVQPVVSVERTVFYRERAAHMYSPLPYALGQVAIELPYILVQSLIYGVLVYAMIGFEWTAAKFFWYLFFMYFTLSYYTFYGMMSVGLTPSYNVASVVSTAFYAIWNLFSGFIIPRTRIPIWWRWYYWVCPVAWTLYGLVTSQFGDVTDTFDNGVRISDFVESYFGYHRDFLWVVAVMVVSFAVLFAFLFGLSIKIFNFQKR</sequence>
<protein>
    <recommendedName>
        <fullName evidence="6">ABC transporter G family member 53</fullName>
        <shortName evidence="6">OsABCG53</shortName>
    </recommendedName>
    <alternativeName>
        <fullName evidence="5">Pleiotropic drug resistance protein 20</fullName>
        <shortName evidence="5">OsPDR20</shortName>
    </alternativeName>
</protein>
<proteinExistence type="evidence at transcript level"/>
<evidence type="ECO:0000250" key="1"/>
<evidence type="ECO:0000255" key="2"/>
<evidence type="ECO:0000255" key="3">
    <source>
        <dbReference type="PROSITE-ProRule" id="PRU00434"/>
    </source>
</evidence>
<evidence type="ECO:0000255" key="4">
    <source>
        <dbReference type="PROSITE-ProRule" id="PRU00442"/>
    </source>
</evidence>
<evidence type="ECO:0000303" key="5">
    <source>
    </source>
</evidence>
<evidence type="ECO:0000305" key="6"/>
<evidence type="ECO:0000312" key="7">
    <source>
        <dbReference type="EMBL" id="ACD31691.1"/>
    </source>
</evidence>
<evidence type="ECO:0000312" key="8">
    <source>
        <dbReference type="EMBL" id="BAD29138.1"/>
    </source>
</evidence>
<evidence type="ECO:0000312" key="9">
    <source>
        <dbReference type="EMBL" id="BAD29139.1"/>
    </source>
</evidence>
<evidence type="ECO:0000312" key="10">
    <source>
        <dbReference type="EMBL" id="BAD29206.1"/>
    </source>
</evidence>
<evidence type="ECO:0000312" key="11">
    <source>
        <dbReference type="EMBL" id="BAD29207.1"/>
    </source>
</evidence>
<evidence type="ECO:0000312" key="12">
    <source>
        <dbReference type="EMBL" id="BAH94511.1"/>
    </source>
</evidence>
<evidence type="ECO:0000312" key="13">
    <source>
        <dbReference type="EMBL" id="EAZ44307.1"/>
    </source>
</evidence>
<feature type="chain" id="PRO_0000433462" description="ABC transporter G family member 53">
    <location>
        <begin position="1"/>
        <end position="1446"/>
    </location>
</feature>
<feature type="transmembrane region" description="Helical" evidence="2">
    <location>
        <begin position="523"/>
        <end position="543"/>
    </location>
</feature>
<feature type="transmembrane region" description="Helical" evidence="2">
    <location>
        <begin position="555"/>
        <end position="575"/>
    </location>
</feature>
<feature type="transmembrane region" description="Helical" evidence="2">
    <location>
        <begin position="610"/>
        <end position="630"/>
    </location>
</feature>
<feature type="transmembrane region" description="Helical" evidence="2">
    <location>
        <begin position="641"/>
        <end position="661"/>
    </location>
</feature>
<feature type="transmembrane region" description="Helical" evidence="2">
    <location>
        <begin position="666"/>
        <end position="686"/>
    </location>
</feature>
<feature type="transmembrane region" description="Helical" evidence="2">
    <location>
        <begin position="752"/>
        <end position="772"/>
    </location>
</feature>
<feature type="transmembrane region" description="Helical" evidence="2">
    <location>
        <begin position="1195"/>
        <end position="1215"/>
    </location>
</feature>
<feature type="transmembrane region" description="Helical" evidence="2">
    <location>
        <begin position="1225"/>
        <end position="1242"/>
    </location>
</feature>
<feature type="transmembrane region" description="Helical" evidence="2">
    <location>
        <begin position="1281"/>
        <end position="1301"/>
    </location>
</feature>
<feature type="transmembrane region" description="Helical" evidence="2">
    <location>
        <begin position="1308"/>
        <end position="1328"/>
    </location>
</feature>
<feature type="transmembrane region" description="Helical" evidence="2">
    <location>
        <begin position="1338"/>
        <end position="1358"/>
    </location>
</feature>
<feature type="transmembrane region" description="Helical" evidence="2">
    <location>
        <begin position="1363"/>
        <end position="1383"/>
    </location>
</feature>
<feature type="transmembrane region" description="Helical" evidence="2">
    <location>
        <begin position="1415"/>
        <end position="1435"/>
    </location>
</feature>
<feature type="domain" description="ABC transporter 1" evidence="3">
    <location>
        <begin position="153"/>
        <end position="426"/>
    </location>
</feature>
<feature type="domain" description="ABC transmembrane type-2 1" evidence="4">
    <location>
        <begin position="504"/>
        <end position="717"/>
    </location>
</feature>
<feature type="domain" description="ABC transporter 2" evidence="3">
    <location>
        <begin position="849"/>
        <end position="1101"/>
    </location>
</feature>
<feature type="domain" description="ABC transmembrane type-2 2" evidence="4">
    <location>
        <begin position="1174"/>
        <end position="1388"/>
    </location>
</feature>
<feature type="binding site" evidence="3">
    <location>
        <begin position="186"/>
        <end position="193"/>
    </location>
    <ligand>
        <name>ATP</name>
        <dbReference type="ChEBI" id="CHEBI:30616"/>
        <label>1</label>
    </ligand>
</feature>
<feature type="binding site" evidence="3">
    <location>
        <begin position="894"/>
        <end position="901"/>
    </location>
    <ligand>
        <name>ATP</name>
        <dbReference type="ChEBI" id="CHEBI:30616"/>
        <label>2</label>
    </ligand>
</feature>
<feature type="sequence conflict" description="In Ref. 6; BAG87376." evidence="6" ref="6">
    <original>V</original>
    <variation>A</variation>
    <location>
        <position position="1016"/>
    </location>
</feature>
<gene>
    <name evidence="6" type="primary">ABCG53</name>
    <name evidence="5" type="synonym">PDR20</name>
    <name evidence="12" type="ordered locus">Os09g0332700</name>
    <name type="ordered locus">LOC_Os09g16330</name>
    <name evidence="13" type="ORF">OsJ_28928</name>
    <name evidence="10 11" type="ORF">OSJNBa0017I18.21</name>
    <name evidence="8 9" type="ORF">OSJNBb0095I04.27</name>
</gene>
<name>AB53G_ORYSJ</name>
<keyword id="KW-0067">ATP-binding</keyword>
<keyword id="KW-0472">Membrane</keyword>
<keyword id="KW-0547">Nucleotide-binding</keyword>
<keyword id="KW-1185">Reference proteome</keyword>
<keyword id="KW-0677">Repeat</keyword>
<keyword id="KW-0812">Transmembrane</keyword>
<keyword id="KW-1133">Transmembrane helix</keyword>
<keyword id="KW-0813">Transport</keyword>
<organism>
    <name type="scientific">Oryza sativa subsp. japonica</name>
    <name type="common">Rice</name>
    <dbReference type="NCBI Taxonomy" id="39947"/>
    <lineage>
        <taxon>Eukaryota</taxon>
        <taxon>Viridiplantae</taxon>
        <taxon>Streptophyta</taxon>
        <taxon>Embryophyta</taxon>
        <taxon>Tracheophyta</taxon>
        <taxon>Spermatophyta</taxon>
        <taxon>Magnoliopsida</taxon>
        <taxon>Liliopsida</taxon>
        <taxon>Poales</taxon>
        <taxon>Poaceae</taxon>
        <taxon>BOP clade</taxon>
        <taxon>Oryzoideae</taxon>
        <taxon>Oryzeae</taxon>
        <taxon>Oryzinae</taxon>
        <taxon>Oryza</taxon>
        <taxon>Oryza sativa</taxon>
    </lineage>
</organism>
<dbReference type="EMBL" id="AP005701">
    <property type="protein sequence ID" value="BAD29138.1"/>
    <property type="status" value="ALT_SEQ"/>
    <property type="molecule type" value="Genomic_DNA"/>
</dbReference>
<dbReference type="EMBL" id="AP005701">
    <property type="protein sequence ID" value="BAD29139.1"/>
    <property type="status" value="ALT_SEQ"/>
    <property type="molecule type" value="Genomic_DNA"/>
</dbReference>
<dbReference type="EMBL" id="AP005724">
    <property type="protein sequence ID" value="BAD29206.1"/>
    <property type="status" value="ALT_SEQ"/>
    <property type="molecule type" value="Genomic_DNA"/>
</dbReference>
<dbReference type="EMBL" id="AP005724">
    <property type="protein sequence ID" value="BAD29207.1"/>
    <property type="status" value="ALT_SEQ"/>
    <property type="molecule type" value="Genomic_DNA"/>
</dbReference>
<dbReference type="EMBL" id="AP008215">
    <property type="protein sequence ID" value="BAH94511.1"/>
    <property type="status" value="ALT_SEQ"/>
    <property type="molecule type" value="Genomic_DNA"/>
</dbReference>
<dbReference type="EMBL" id="AP014965">
    <property type="status" value="NOT_ANNOTATED_CDS"/>
    <property type="molecule type" value="Genomic_DNA"/>
</dbReference>
<dbReference type="EMBL" id="CM000146">
    <property type="protein sequence ID" value="EAZ44307.1"/>
    <property type="molecule type" value="Genomic_DNA"/>
</dbReference>
<dbReference type="EMBL" id="EU682752">
    <property type="protein sequence ID" value="ACD31691.1"/>
    <property type="molecule type" value="mRNA"/>
</dbReference>
<dbReference type="EMBL" id="AK060237">
    <property type="protein sequence ID" value="BAG87376.1"/>
    <property type="status" value="ALT_INIT"/>
    <property type="molecule type" value="mRNA"/>
</dbReference>
<dbReference type="RefSeq" id="XP_015611955.1">
    <property type="nucleotide sequence ID" value="XM_015756469.1"/>
</dbReference>
<dbReference type="SMR" id="A3BXL8"/>
<dbReference type="FunCoup" id="A3BXL8">
    <property type="interactions" value="108"/>
</dbReference>
<dbReference type="STRING" id="39947.A3BXL8"/>
<dbReference type="PaxDb" id="39947-A3BXL8"/>
<dbReference type="KEGG" id="dosa:Os09g0332700"/>
<dbReference type="eggNOG" id="KOG0065">
    <property type="taxonomic scope" value="Eukaryota"/>
</dbReference>
<dbReference type="InParanoid" id="A3BXL8"/>
<dbReference type="OrthoDB" id="66620at2759"/>
<dbReference type="Proteomes" id="UP000000763">
    <property type="component" value="Chromosome 9"/>
</dbReference>
<dbReference type="Proteomes" id="UP000007752">
    <property type="component" value="Chromosome 9"/>
</dbReference>
<dbReference type="Proteomes" id="UP000059680">
    <property type="component" value="Chromosome 9"/>
</dbReference>
<dbReference type="GO" id="GO:0016020">
    <property type="term" value="C:membrane"/>
    <property type="evidence" value="ECO:0007669"/>
    <property type="project" value="UniProtKB-SubCell"/>
</dbReference>
<dbReference type="GO" id="GO:0140359">
    <property type="term" value="F:ABC-type transporter activity"/>
    <property type="evidence" value="ECO:0007669"/>
    <property type="project" value="InterPro"/>
</dbReference>
<dbReference type="GO" id="GO:0005524">
    <property type="term" value="F:ATP binding"/>
    <property type="evidence" value="ECO:0007669"/>
    <property type="project" value="UniProtKB-KW"/>
</dbReference>
<dbReference type="GO" id="GO:0016887">
    <property type="term" value="F:ATP hydrolysis activity"/>
    <property type="evidence" value="ECO:0007669"/>
    <property type="project" value="InterPro"/>
</dbReference>
<dbReference type="CDD" id="cd03233">
    <property type="entry name" value="ABCG_PDR_domain1"/>
    <property type="match status" value="1"/>
</dbReference>
<dbReference type="CDD" id="cd03232">
    <property type="entry name" value="ABCG_PDR_domain2"/>
    <property type="match status" value="1"/>
</dbReference>
<dbReference type="FunFam" id="3.40.50.300:FF:000532">
    <property type="entry name" value="ABC transporter G family member 34"/>
    <property type="match status" value="1"/>
</dbReference>
<dbReference type="FunFam" id="3.40.50.300:FF:000059">
    <property type="entry name" value="ABC transporter G family member 40"/>
    <property type="match status" value="1"/>
</dbReference>
<dbReference type="Gene3D" id="3.40.50.300">
    <property type="entry name" value="P-loop containing nucleotide triphosphate hydrolases"/>
    <property type="match status" value="2"/>
</dbReference>
<dbReference type="InterPro" id="IPR003593">
    <property type="entry name" value="AAA+_ATPase"/>
</dbReference>
<dbReference type="InterPro" id="IPR013525">
    <property type="entry name" value="ABC2_TM"/>
</dbReference>
<dbReference type="InterPro" id="IPR029481">
    <property type="entry name" value="ABC_trans_N"/>
</dbReference>
<dbReference type="InterPro" id="IPR003439">
    <property type="entry name" value="ABC_transporter-like_ATP-bd"/>
</dbReference>
<dbReference type="InterPro" id="IPR043926">
    <property type="entry name" value="ABCG_dom"/>
</dbReference>
<dbReference type="InterPro" id="IPR034001">
    <property type="entry name" value="ABCG_PDR_1"/>
</dbReference>
<dbReference type="InterPro" id="IPR034003">
    <property type="entry name" value="ABCG_PDR_2"/>
</dbReference>
<dbReference type="InterPro" id="IPR027417">
    <property type="entry name" value="P-loop_NTPase"/>
</dbReference>
<dbReference type="InterPro" id="IPR013581">
    <property type="entry name" value="PDR_assoc"/>
</dbReference>
<dbReference type="PANTHER" id="PTHR48040:SF35">
    <property type="entry name" value="ABC TRANSPORTER G FAMILY MEMBER 39-LIKE"/>
    <property type="match status" value="1"/>
</dbReference>
<dbReference type="PANTHER" id="PTHR48040">
    <property type="entry name" value="PLEIOTROPIC DRUG RESISTANCE PROTEIN 1-LIKE ISOFORM X1"/>
    <property type="match status" value="1"/>
</dbReference>
<dbReference type="Pfam" id="PF01061">
    <property type="entry name" value="ABC2_membrane"/>
    <property type="match status" value="2"/>
</dbReference>
<dbReference type="Pfam" id="PF19055">
    <property type="entry name" value="ABC2_membrane_7"/>
    <property type="match status" value="1"/>
</dbReference>
<dbReference type="Pfam" id="PF00005">
    <property type="entry name" value="ABC_tran"/>
    <property type="match status" value="2"/>
</dbReference>
<dbReference type="Pfam" id="PF14510">
    <property type="entry name" value="ABC_trans_N"/>
    <property type="match status" value="1"/>
</dbReference>
<dbReference type="Pfam" id="PF08370">
    <property type="entry name" value="PDR_assoc"/>
    <property type="match status" value="1"/>
</dbReference>
<dbReference type="SMART" id="SM00382">
    <property type="entry name" value="AAA"/>
    <property type="match status" value="2"/>
</dbReference>
<dbReference type="SUPFAM" id="SSF52540">
    <property type="entry name" value="P-loop containing nucleoside triphosphate hydrolases"/>
    <property type="match status" value="2"/>
</dbReference>
<dbReference type="PROSITE" id="PS50893">
    <property type="entry name" value="ABC_TRANSPORTER_2"/>
    <property type="match status" value="2"/>
</dbReference>
<accession>A3BXL8</accession>
<accession>C7J764</accession>
<accession>Q6EQ63</accession>
<accession>Q6EQ64</accession>
<reference key="1">
    <citation type="journal article" date="2005" name="Nature">
        <title>The map-based sequence of the rice genome.</title>
        <authorList>
            <consortium name="International rice genome sequencing project (IRGSP)"/>
        </authorList>
    </citation>
    <scope>NUCLEOTIDE SEQUENCE [LARGE SCALE GENOMIC DNA]</scope>
    <source>
        <strain>cv. Nipponbare</strain>
    </source>
</reference>
<reference key="2">
    <citation type="journal article" date="2008" name="Nucleic Acids Res.">
        <title>The rice annotation project database (RAP-DB): 2008 update.</title>
        <authorList>
            <consortium name="The rice annotation project (RAP)"/>
        </authorList>
    </citation>
    <scope>GENOME REANNOTATION</scope>
    <source>
        <strain>cv. Nipponbare</strain>
    </source>
</reference>
<reference key="3">
    <citation type="journal article" date="2013" name="Rice">
        <title>Improvement of the Oryza sativa Nipponbare reference genome using next generation sequence and optical map data.</title>
        <authorList>
            <person name="Kawahara Y."/>
            <person name="de la Bastide M."/>
            <person name="Hamilton J.P."/>
            <person name="Kanamori H."/>
            <person name="McCombie W.R."/>
            <person name="Ouyang S."/>
            <person name="Schwartz D.C."/>
            <person name="Tanaka T."/>
            <person name="Wu J."/>
            <person name="Zhou S."/>
            <person name="Childs K.L."/>
            <person name="Davidson R.M."/>
            <person name="Lin H."/>
            <person name="Quesada-Ocampo L."/>
            <person name="Vaillancourt B."/>
            <person name="Sakai H."/>
            <person name="Lee S.S."/>
            <person name="Kim J."/>
            <person name="Numa H."/>
            <person name="Itoh T."/>
            <person name="Buell C.R."/>
            <person name="Matsumoto T."/>
        </authorList>
    </citation>
    <scope>GENOME REANNOTATION</scope>
    <source>
        <strain>cv. Nipponbare</strain>
    </source>
</reference>
<reference key="4">
    <citation type="journal article" date="2005" name="PLoS Biol.">
        <title>The genomes of Oryza sativa: a history of duplications.</title>
        <authorList>
            <person name="Yu J."/>
            <person name="Wang J."/>
            <person name="Lin W."/>
            <person name="Li S."/>
            <person name="Li H."/>
            <person name="Zhou J."/>
            <person name="Ni P."/>
            <person name="Dong W."/>
            <person name="Hu S."/>
            <person name="Zeng C."/>
            <person name="Zhang J."/>
            <person name="Zhang Y."/>
            <person name="Li R."/>
            <person name="Xu Z."/>
            <person name="Li S."/>
            <person name="Li X."/>
            <person name="Zheng H."/>
            <person name="Cong L."/>
            <person name="Lin L."/>
            <person name="Yin J."/>
            <person name="Geng J."/>
            <person name="Li G."/>
            <person name="Shi J."/>
            <person name="Liu J."/>
            <person name="Lv H."/>
            <person name="Li J."/>
            <person name="Wang J."/>
            <person name="Deng Y."/>
            <person name="Ran L."/>
            <person name="Shi X."/>
            <person name="Wang X."/>
            <person name="Wu Q."/>
            <person name="Li C."/>
            <person name="Ren X."/>
            <person name="Wang J."/>
            <person name="Wang X."/>
            <person name="Li D."/>
            <person name="Liu D."/>
            <person name="Zhang X."/>
            <person name="Ji Z."/>
            <person name="Zhao W."/>
            <person name="Sun Y."/>
            <person name="Zhang Z."/>
            <person name="Bao J."/>
            <person name="Han Y."/>
            <person name="Dong L."/>
            <person name="Ji J."/>
            <person name="Chen P."/>
            <person name="Wu S."/>
            <person name="Liu J."/>
            <person name="Xiao Y."/>
            <person name="Bu D."/>
            <person name="Tan J."/>
            <person name="Yang L."/>
            <person name="Ye C."/>
            <person name="Zhang J."/>
            <person name="Xu J."/>
            <person name="Zhou Y."/>
            <person name="Yu Y."/>
            <person name="Zhang B."/>
            <person name="Zhuang S."/>
            <person name="Wei H."/>
            <person name="Liu B."/>
            <person name="Lei M."/>
            <person name="Yu H."/>
            <person name="Li Y."/>
            <person name="Xu H."/>
            <person name="Wei S."/>
            <person name="He X."/>
            <person name="Fang L."/>
            <person name="Zhang Z."/>
            <person name="Zhang Y."/>
            <person name="Huang X."/>
            <person name="Su Z."/>
            <person name="Tong W."/>
            <person name="Li J."/>
            <person name="Tong Z."/>
            <person name="Li S."/>
            <person name="Ye J."/>
            <person name="Wang L."/>
            <person name="Fang L."/>
            <person name="Lei T."/>
            <person name="Chen C.-S."/>
            <person name="Chen H.-C."/>
            <person name="Xu Z."/>
            <person name="Li H."/>
            <person name="Huang H."/>
            <person name="Zhang F."/>
            <person name="Xu H."/>
            <person name="Li N."/>
            <person name="Zhao C."/>
            <person name="Li S."/>
            <person name="Dong L."/>
            <person name="Huang Y."/>
            <person name="Li L."/>
            <person name="Xi Y."/>
            <person name="Qi Q."/>
            <person name="Li W."/>
            <person name="Zhang B."/>
            <person name="Hu W."/>
            <person name="Zhang Y."/>
            <person name="Tian X."/>
            <person name="Jiao Y."/>
            <person name="Liang X."/>
            <person name="Jin J."/>
            <person name="Gao L."/>
            <person name="Zheng W."/>
            <person name="Hao B."/>
            <person name="Liu S.-M."/>
            <person name="Wang W."/>
            <person name="Yuan L."/>
            <person name="Cao M."/>
            <person name="McDermott J."/>
            <person name="Samudrala R."/>
            <person name="Wang J."/>
            <person name="Wong G.K.-S."/>
            <person name="Yang H."/>
        </authorList>
    </citation>
    <scope>NUCLEOTIDE SEQUENCE [LARGE SCALE GENOMIC DNA]</scope>
    <source>
        <strain>cv. Nipponbare</strain>
    </source>
</reference>
<reference key="5">
    <citation type="submission" date="2008-04" db="EMBL/GenBank/DDBJ databases">
        <title>Transcriptional profiling of the PDR gene family in rice roots in response to plant growth regulators, redox perturbations and weak organic acid stress.</title>
        <authorList>
            <person name="Moons A."/>
        </authorList>
    </citation>
    <scope>NUCLEOTIDE SEQUENCE [LARGE SCALE MRNA]</scope>
    <source>
        <strain>cv. Nipponbare</strain>
        <tissue evidence="7">Root</tissue>
    </source>
</reference>
<reference key="6">
    <citation type="journal article" date="2003" name="Science">
        <title>Collection, mapping, and annotation of over 28,000 cDNA clones from japonica rice.</title>
        <authorList>
            <consortium name="The rice full-length cDNA consortium"/>
        </authorList>
    </citation>
    <scope>NUCLEOTIDE SEQUENCE [LARGE SCALE MRNA] OF 1000-1446</scope>
    <source>
        <strain>cv. Nipponbare</strain>
    </source>
</reference>
<reference key="7">
    <citation type="journal article" date="2006" name="FEBS Lett.">
        <title>Organization and function of the plant pleiotropic drug resistance ABC transporter family.</title>
        <authorList>
            <person name="Crouzet J."/>
            <person name="Trombik T."/>
            <person name="Fraysse A.S."/>
            <person name="Boutry M."/>
        </authorList>
    </citation>
    <scope>GENE FAMILY</scope>
    <scope>NOMENCLATURE</scope>
</reference>
<reference key="8">
    <citation type="journal article" date="2008" name="Trends Plant Sci.">
        <title>Plant ABC proteins - a unified nomenclature and updated inventory.</title>
        <authorList>
            <person name="Verrier P.J."/>
            <person name="Bird D."/>
            <person name="Burla B."/>
            <person name="Dassa E."/>
            <person name="Forestier C."/>
            <person name="Geisler M."/>
            <person name="Klein M."/>
            <person name="Kolukisaoglu H.U."/>
            <person name="Lee Y."/>
            <person name="Martinoia E."/>
            <person name="Murphy A."/>
            <person name="Rea P.A."/>
            <person name="Samuels L."/>
            <person name="Schulz B."/>
            <person name="Spalding E.J."/>
            <person name="Yazaki K."/>
            <person name="Theodoulou F.L."/>
        </authorList>
    </citation>
    <scope>GENE FAMILY</scope>
    <scope>NOMENCLATURE</scope>
</reference>